<keyword id="KW-0131">Cell cycle</keyword>
<keyword id="KW-0132">Cell division</keyword>
<keyword id="KW-0717">Septation</keyword>
<comment type="function">
    <text evidence="1">Cell division inhibitor that blocks the formation of polar Z ring septums. Rapidly oscillates between the poles of the cell to destabilize FtsZ filaments that have formed before they mature into polar Z rings. Prevents FtsZ polymerization.</text>
</comment>
<comment type="subunit">
    <text evidence="1">Interacts with MinD and FtsZ.</text>
</comment>
<comment type="similarity">
    <text evidence="1">Belongs to the MinC family.</text>
</comment>
<dbReference type="EMBL" id="CP001161">
    <property type="protein sequence ID" value="ACL30688.1"/>
    <property type="molecule type" value="Genomic_DNA"/>
</dbReference>
<dbReference type="RefSeq" id="WP_009874282.1">
    <property type="nucleotide sequence ID" value="NC_011833.1"/>
</dbReference>
<dbReference type="SMR" id="B8D9B7"/>
<dbReference type="KEGG" id="bap:BUAP5A_320"/>
<dbReference type="HOGENOM" id="CLU_067812_0_1_6"/>
<dbReference type="OrthoDB" id="9794530at2"/>
<dbReference type="Proteomes" id="UP000006904">
    <property type="component" value="Chromosome"/>
</dbReference>
<dbReference type="GO" id="GO:0000902">
    <property type="term" value="P:cell morphogenesis"/>
    <property type="evidence" value="ECO:0007669"/>
    <property type="project" value="InterPro"/>
</dbReference>
<dbReference type="GO" id="GO:0000917">
    <property type="term" value="P:division septum assembly"/>
    <property type="evidence" value="ECO:0007669"/>
    <property type="project" value="UniProtKB-KW"/>
</dbReference>
<dbReference type="GO" id="GO:0051302">
    <property type="term" value="P:regulation of cell division"/>
    <property type="evidence" value="ECO:0007669"/>
    <property type="project" value="InterPro"/>
</dbReference>
<dbReference type="GO" id="GO:1901891">
    <property type="term" value="P:regulation of cell septum assembly"/>
    <property type="evidence" value="ECO:0007669"/>
    <property type="project" value="InterPro"/>
</dbReference>
<dbReference type="Gene3D" id="2.160.20.70">
    <property type="match status" value="1"/>
</dbReference>
<dbReference type="Gene3D" id="3.30.70.260">
    <property type="match status" value="1"/>
</dbReference>
<dbReference type="HAMAP" id="MF_00267">
    <property type="entry name" value="MinC"/>
    <property type="match status" value="1"/>
</dbReference>
<dbReference type="InterPro" id="IPR016098">
    <property type="entry name" value="CAP/MinC_C"/>
</dbReference>
<dbReference type="InterPro" id="IPR013033">
    <property type="entry name" value="MinC"/>
</dbReference>
<dbReference type="InterPro" id="IPR036145">
    <property type="entry name" value="MinC_C_sf"/>
</dbReference>
<dbReference type="InterPro" id="IPR007874">
    <property type="entry name" value="MinC_N"/>
</dbReference>
<dbReference type="InterPro" id="IPR005526">
    <property type="entry name" value="Septum_form_inhib_MinC_C"/>
</dbReference>
<dbReference type="NCBIfam" id="TIGR01222">
    <property type="entry name" value="minC"/>
    <property type="match status" value="1"/>
</dbReference>
<dbReference type="PANTHER" id="PTHR34108">
    <property type="entry name" value="SEPTUM SITE-DETERMINING PROTEIN MINC"/>
    <property type="match status" value="1"/>
</dbReference>
<dbReference type="PANTHER" id="PTHR34108:SF1">
    <property type="entry name" value="SEPTUM SITE-DETERMINING PROTEIN MINC"/>
    <property type="match status" value="1"/>
</dbReference>
<dbReference type="Pfam" id="PF03775">
    <property type="entry name" value="MinC_C"/>
    <property type="match status" value="1"/>
</dbReference>
<dbReference type="Pfam" id="PF05209">
    <property type="entry name" value="MinC_N"/>
    <property type="match status" value="1"/>
</dbReference>
<dbReference type="SUPFAM" id="SSF63848">
    <property type="entry name" value="Cell-division inhibitor MinC, C-terminal domain"/>
    <property type="match status" value="1"/>
</dbReference>
<protein>
    <recommendedName>
        <fullName evidence="1">Probable septum site-determining protein MinC</fullName>
    </recommendedName>
</protein>
<evidence type="ECO:0000255" key="1">
    <source>
        <dbReference type="HAMAP-Rule" id="MF_00267"/>
    </source>
</evidence>
<name>MINC_BUCA5</name>
<sequence>MQKKSIELKSNNFTLLVLYLNNQNIDLINQSLYKKIQECPKFFKNAPIIVNVSKLCNTVDWKKIKKIIISHGFFVVGVSGCQDGILKKNIIDSGLPILSERKNNKSNIITNFFINSYKNKKKETINKVEKTHIIDIPVRSGQKIYAKHADLIVINNVSAGAELVADGNIHVYGIVRGRVLAGANGDTSRKIFCTGLFAELVSISGEYWLSDQIPSEFIGKSAQIYLKNKFLTINSLS</sequence>
<feature type="chain" id="PRO_1000191236" description="Probable septum site-determining protein MinC">
    <location>
        <begin position="1"/>
        <end position="237"/>
    </location>
</feature>
<organism>
    <name type="scientific">Buchnera aphidicola subsp. Acyrthosiphon pisum (strain 5A)</name>
    <dbReference type="NCBI Taxonomy" id="563178"/>
    <lineage>
        <taxon>Bacteria</taxon>
        <taxon>Pseudomonadati</taxon>
        <taxon>Pseudomonadota</taxon>
        <taxon>Gammaproteobacteria</taxon>
        <taxon>Enterobacterales</taxon>
        <taxon>Erwiniaceae</taxon>
        <taxon>Buchnera</taxon>
    </lineage>
</organism>
<proteinExistence type="inferred from homology"/>
<reference key="1">
    <citation type="journal article" date="2009" name="Science">
        <title>The dynamics and time scale of ongoing genomic erosion in symbiotic bacteria.</title>
        <authorList>
            <person name="Moran N.A."/>
            <person name="McLaughlin H.J."/>
            <person name="Sorek R."/>
        </authorList>
    </citation>
    <scope>NUCLEOTIDE SEQUENCE [LARGE SCALE GENOMIC DNA]</scope>
    <source>
        <strain>5A</strain>
    </source>
</reference>
<accession>B8D9B7</accession>
<gene>
    <name evidence="1" type="primary">minC</name>
    <name type="ordered locus">BUAP5A_320</name>
</gene>